<sequence>MGAAASIQTTVTTINKKISEKLEQTASASATANCDINIGNIIFKKNKGCNVLVKNMCSANASAQLDAIVSAVREVYDQLTEQQKAYAPSLLTAALNIQTNVSTITQDFETYIKQKCNSDAVINNIINVQSLEVDECSAPPGQIMTFEFINTGTATGNCAMKSVLDVLTKSSDRVSGNQSTGNDFSKYLYIIGGIICFLILLYYAKKLFFMSTNDKVKVLLAKKPDVHWTTYIDTYFRSSPVLV</sequence>
<keyword id="KW-1015">Disulfide bond</keyword>
<keyword id="KW-0945">Host-virus interaction</keyword>
<keyword id="KW-0426">Late protein</keyword>
<keyword id="KW-0449">Lipoprotein</keyword>
<keyword id="KW-0472">Membrane</keyword>
<keyword id="KW-0519">Myristate</keyword>
<keyword id="KW-1185">Reference proteome</keyword>
<keyword id="KW-0812">Transmembrane</keyword>
<keyword id="KW-1133">Transmembrane helix</keyword>
<keyword id="KW-1161">Viral attachment to host cell</keyword>
<keyword id="KW-0261">Viral envelope protein</keyword>
<keyword id="KW-1162">Viral penetration into host cytoplasm</keyword>
<keyword id="KW-0946">Virion</keyword>
<keyword id="KW-1160">Virus entry into host cell</keyword>
<name>PG095_FOWPN</name>
<gene>
    <name type="primary">OPG099</name>
    <name type="ordered locus">FPV128</name>
    <name type="ORF">FP2</name>
</gene>
<organismHost>
    <name type="scientific">Vertebrata</name>
    <dbReference type="NCBI Taxonomy" id="7742"/>
</organismHost>
<evidence type="ECO:0000250" key="1">
    <source>
        <dbReference type="UniProtKB" id="P07612"/>
    </source>
</evidence>
<evidence type="ECO:0000255" key="2"/>
<evidence type="ECO:0000305" key="3"/>
<protein>
    <recommendedName>
        <fullName>Entry-fusion complex associated protein OPG095</fullName>
    </recommendedName>
    <alternativeName>
        <fullName>EFC-associated protein OPG095</fullName>
    </alternativeName>
    <alternativeName>
        <fullName>Protein L1</fullName>
    </alternativeName>
    <alternativeName>
        <fullName>Protein L1 homolog</fullName>
    </alternativeName>
    <alternativeName>
        <fullName>Virion membrane protein M25</fullName>
    </alternativeName>
</protein>
<feature type="initiator methionine" description="Removed; by host" evidence="1">
    <location>
        <position position="1"/>
    </location>
</feature>
<feature type="chain" id="PRO_0000099615" description="Entry-fusion complex associated protein OPG095">
    <location>
        <begin position="2"/>
        <end position="243"/>
    </location>
</feature>
<feature type="topological domain" description="Virion surface" evidence="2">
    <location>
        <begin position="2"/>
        <end position="183"/>
    </location>
</feature>
<feature type="transmembrane region" description="Helical" evidence="2">
    <location>
        <begin position="184"/>
        <end position="204"/>
    </location>
</feature>
<feature type="topological domain" description="Intravirion" evidence="2">
    <location>
        <begin position="205"/>
        <end position="243"/>
    </location>
</feature>
<feature type="region of interest" description="Targeting to MV membrane" evidence="1">
    <location>
        <begin position="2"/>
        <end position="12"/>
    </location>
</feature>
<feature type="lipid moiety-binding region" description="N-myristoyl glycine; by host" evidence="1">
    <location>
        <position position="2"/>
    </location>
</feature>
<feature type="disulfide bond" description="by OPG088" evidence="1">
    <location>
        <begin position="34"/>
        <end position="57"/>
    </location>
</feature>
<feature type="disulfide bond" description="by OPG088" evidence="1">
    <location>
        <begin position="49"/>
        <end position="136"/>
    </location>
</feature>
<feature type="disulfide bond" description="by OPG088" evidence="1">
    <location>
        <begin position="116"/>
        <end position="158"/>
    </location>
</feature>
<feature type="sequence conflict" description="In Ref. 1; BAA00225." evidence="3" ref="1">
    <original>S</original>
    <variation>C</variation>
    <location>
        <position position="19"/>
    </location>
</feature>
<feature type="sequence conflict" description="In Ref. 1; BAA00225." evidence="3" ref="1">
    <original>A</original>
    <variation>R</variation>
    <location>
        <position position="30"/>
    </location>
</feature>
<comment type="function">
    <text evidence="1">Component of the entry fusion complex (EFC), which consists of 11 proteins. During cell infection, this complex mediates entry of the virion core into the host cytoplasm by a two-step mechanism consisting of lipid mixing of the viral and cellular membranes and subsequent pore formation.</text>
</comment>
<comment type="subunit">
    <text evidence="1">Component of the entry fusion complex (EFC) composed of OPG053, OPG076, OPG086, OPG094, OPG095, OPG099, OPG107, OPG143, OPG104, OPG147 and OPG155. Except for OPG095 and OPG053, each of the EFC proteins is required for assembly or stability of the complex.</text>
</comment>
<comment type="subcellular location">
    <subcellularLocation>
        <location evidence="1">Virion membrane</location>
        <topology evidence="1">Single-pass membrane protein</topology>
    </subcellularLocation>
    <text evidence="1">Localizes to the membrane surrounding the core of mature virus particles (MV).</text>
</comment>
<comment type="induction">
    <text evidence="1">Expressed in the late phase of the viral replicative cycle.</text>
</comment>
<comment type="PTM">
    <text evidence="1">Myristoylated.</text>
</comment>
<comment type="PTM">
    <text evidence="1">Disulfid bonds are oxidized in the cytoplasm by OPG088 protein.</text>
</comment>
<comment type="PTM">
    <text evidence="1">Unglycosylated because produced in viral factories instead of the classic ER -Golgi route.</text>
</comment>
<comment type="similarity">
    <text evidence="3">Belongs to the orthopoxvirus OPG095 family.</text>
</comment>
<reference key="1">
    <citation type="journal article" date="1988" name="J. Gen. Virol.">
        <title>Comparison of a conserved region in fowlpox virus and vaccinia virus genomes and the translocation of the fowlpox virus thymidine kinase gene.</title>
        <authorList>
            <person name="Binns M.M."/>
            <person name="Tomley F.M."/>
            <person name="Campbell J."/>
            <person name="Boursnell M.E.G."/>
        </authorList>
    </citation>
    <scope>NUCLEOTIDE SEQUENCE [GENOMIC DNA]</scope>
    <source>
        <strain>FP-9 / Isolate HP-444</strain>
    </source>
</reference>
<reference key="2">
    <citation type="journal article" date="2000" name="J. Virol.">
        <title>The genome of fowlpox virus.</title>
        <authorList>
            <person name="Afonso C.L."/>
            <person name="Tulman E.R."/>
            <person name="Lu Z."/>
            <person name="Zsak L."/>
            <person name="Kutish G.F."/>
            <person name="Rock D.L."/>
        </authorList>
    </citation>
    <scope>NUCLEOTIDE SEQUENCE [LARGE SCALE GENOMIC DNA]</scope>
</reference>
<accession>P15910</accession>
<accession>Q9J595</accession>
<organism>
    <name type="scientific">Fowlpox virus (strain NVSL)</name>
    <name type="common">FPV</name>
    <dbReference type="NCBI Taxonomy" id="928301"/>
    <lineage>
        <taxon>Viruses</taxon>
        <taxon>Varidnaviria</taxon>
        <taxon>Bamfordvirae</taxon>
        <taxon>Nucleocytoviricota</taxon>
        <taxon>Pokkesviricetes</taxon>
        <taxon>Chitovirales</taxon>
        <taxon>Poxviridae</taxon>
        <taxon>Chordopoxvirinae</taxon>
        <taxon>Avipoxvirus</taxon>
        <taxon>Fowlpox virus</taxon>
    </lineage>
</organism>
<proteinExistence type="inferred from homology"/>
<dbReference type="EMBL" id="D00320">
    <property type="protein sequence ID" value="BAA00225.1"/>
    <property type="molecule type" value="Genomic_DNA"/>
</dbReference>
<dbReference type="EMBL" id="AF198100">
    <property type="protein sequence ID" value="AAF44472.1"/>
    <property type="molecule type" value="Genomic_DNA"/>
</dbReference>
<dbReference type="PIR" id="JS0222">
    <property type="entry name" value="WMVZP2"/>
</dbReference>
<dbReference type="RefSeq" id="NP_039091.1">
    <property type="nucleotide sequence ID" value="NC_002188.1"/>
</dbReference>
<dbReference type="SMR" id="P15910"/>
<dbReference type="GeneID" id="1486676"/>
<dbReference type="KEGG" id="vg:1486676"/>
<dbReference type="Proteomes" id="UP000008597">
    <property type="component" value="Segment"/>
</dbReference>
<dbReference type="GO" id="GO:0016020">
    <property type="term" value="C:membrane"/>
    <property type="evidence" value="ECO:0007669"/>
    <property type="project" value="UniProtKB-KW"/>
</dbReference>
<dbReference type="GO" id="GO:0019031">
    <property type="term" value="C:viral envelope"/>
    <property type="evidence" value="ECO:0007669"/>
    <property type="project" value="UniProtKB-KW"/>
</dbReference>
<dbReference type="GO" id="GO:0055036">
    <property type="term" value="C:virion membrane"/>
    <property type="evidence" value="ECO:0007669"/>
    <property type="project" value="UniProtKB-SubCell"/>
</dbReference>
<dbReference type="GO" id="GO:0046718">
    <property type="term" value="P:symbiont entry into host cell"/>
    <property type="evidence" value="ECO:0007669"/>
    <property type="project" value="UniProtKB-KW"/>
</dbReference>
<dbReference type="GO" id="GO:0019062">
    <property type="term" value="P:virion attachment to host cell"/>
    <property type="evidence" value="ECO:0007669"/>
    <property type="project" value="UniProtKB-KW"/>
</dbReference>
<dbReference type="InterPro" id="IPR003472">
    <property type="entry name" value="Virion_mem_poxvirus_L1"/>
</dbReference>
<dbReference type="Pfam" id="PF02442">
    <property type="entry name" value="L1R_F9L"/>
    <property type="match status" value="1"/>
</dbReference>